<evidence type="ECO:0000250" key="1">
    <source>
        <dbReference type="UniProtKB" id="P05371"/>
    </source>
</evidence>
<evidence type="ECO:0000250" key="2">
    <source>
        <dbReference type="UniProtKB" id="P10909"/>
    </source>
</evidence>
<evidence type="ECO:0000250" key="3">
    <source>
        <dbReference type="UniProtKB" id="Q06890"/>
    </source>
</evidence>
<evidence type="ECO:0000250" key="4">
    <source>
        <dbReference type="UniProtKB" id="Q9XSC5"/>
    </source>
</evidence>
<evidence type="ECO:0000255" key="5"/>
<evidence type="ECO:0000303" key="6">
    <source ref="1"/>
</evidence>
<evidence type="ECO:0000305" key="7"/>
<dbReference type="EMBL" id="M26640">
    <property type="protein sequence ID" value="AAA37102.1"/>
    <property type="molecule type" value="mRNA"/>
</dbReference>
<dbReference type="PIR" id="I48174">
    <property type="entry name" value="I48174"/>
</dbReference>
<dbReference type="SMR" id="P14683"/>
<dbReference type="STRING" id="10036.ENSMAUP00000001386"/>
<dbReference type="GlyCosmos" id="P14683">
    <property type="glycosylation" value="4 sites, No reported glycans"/>
</dbReference>
<dbReference type="eggNOG" id="ENOG502RBQP">
    <property type="taxonomic scope" value="Eukaryota"/>
</dbReference>
<dbReference type="Proteomes" id="UP000189706">
    <property type="component" value="Unplaced"/>
</dbReference>
<dbReference type="GO" id="GO:0042583">
    <property type="term" value="C:chromaffin granule"/>
    <property type="evidence" value="ECO:0007669"/>
    <property type="project" value="UniProtKB-SubCell"/>
</dbReference>
<dbReference type="GO" id="GO:0005737">
    <property type="term" value="C:cytoplasm"/>
    <property type="evidence" value="ECO:0000250"/>
    <property type="project" value="UniProtKB"/>
</dbReference>
<dbReference type="GO" id="GO:0005829">
    <property type="term" value="C:cytosol"/>
    <property type="evidence" value="ECO:0000250"/>
    <property type="project" value="UniProtKB"/>
</dbReference>
<dbReference type="GO" id="GO:0005615">
    <property type="term" value="C:extracellular space"/>
    <property type="evidence" value="ECO:0007669"/>
    <property type="project" value="TreeGrafter"/>
</dbReference>
<dbReference type="GO" id="GO:0043231">
    <property type="term" value="C:intracellular membrane-bounded organelle"/>
    <property type="evidence" value="ECO:0000250"/>
    <property type="project" value="UniProtKB"/>
</dbReference>
<dbReference type="GO" id="GO:0005743">
    <property type="term" value="C:mitochondrial inner membrane"/>
    <property type="evidence" value="ECO:0000250"/>
    <property type="project" value="UniProtKB"/>
</dbReference>
<dbReference type="GO" id="GO:0005739">
    <property type="term" value="C:mitochondrion"/>
    <property type="evidence" value="ECO:0000250"/>
    <property type="project" value="UniProtKB"/>
</dbReference>
<dbReference type="GO" id="GO:0005634">
    <property type="term" value="C:nucleus"/>
    <property type="evidence" value="ECO:0000250"/>
    <property type="project" value="UniProtKB"/>
</dbReference>
<dbReference type="GO" id="GO:0099020">
    <property type="term" value="C:perinuclear endoplasmic reticulum lumen"/>
    <property type="evidence" value="ECO:0000250"/>
    <property type="project" value="UniProtKB"/>
</dbReference>
<dbReference type="GO" id="GO:0051787">
    <property type="term" value="F:misfolded protein binding"/>
    <property type="evidence" value="ECO:0007669"/>
    <property type="project" value="TreeGrafter"/>
</dbReference>
<dbReference type="GO" id="GO:0051082">
    <property type="term" value="F:unfolded protein binding"/>
    <property type="evidence" value="ECO:0000250"/>
    <property type="project" value="UniProtKB"/>
</dbReference>
<dbReference type="GO" id="GO:0030154">
    <property type="term" value="P:cell differentiation"/>
    <property type="evidence" value="ECO:0007669"/>
    <property type="project" value="UniProtKB-KW"/>
</dbReference>
<dbReference type="GO" id="GO:0002434">
    <property type="term" value="P:immune complex clearance"/>
    <property type="evidence" value="ECO:0000250"/>
    <property type="project" value="UniProtKB"/>
</dbReference>
<dbReference type="GO" id="GO:1905907">
    <property type="term" value="P:negative regulation of amyloid fibril formation"/>
    <property type="evidence" value="ECO:0000250"/>
    <property type="project" value="UniProtKB"/>
</dbReference>
<dbReference type="GO" id="GO:0043065">
    <property type="term" value="P:positive regulation of apoptotic process"/>
    <property type="evidence" value="ECO:0000250"/>
    <property type="project" value="UniProtKB"/>
</dbReference>
<dbReference type="GO" id="GO:0032436">
    <property type="term" value="P:positive regulation of proteasomal ubiquitin-dependent protein catabolic process"/>
    <property type="evidence" value="ECO:0007669"/>
    <property type="project" value="TreeGrafter"/>
</dbReference>
<dbReference type="GO" id="GO:0048260">
    <property type="term" value="P:positive regulation of receptor-mediated endocytosis"/>
    <property type="evidence" value="ECO:0000250"/>
    <property type="project" value="UniProtKB"/>
</dbReference>
<dbReference type="GO" id="GO:0050821">
    <property type="term" value="P:protein stabilization"/>
    <property type="evidence" value="ECO:0000250"/>
    <property type="project" value="UniProtKB"/>
</dbReference>
<dbReference type="GO" id="GO:0042127">
    <property type="term" value="P:regulation of cell population proliferation"/>
    <property type="evidence" value="ECO:0000250"/>
    <property type="project" value="UniProtKB"/>
</dbReference>
<dbReference type="GO" id="GO:0007283">
    <property type="term" value="P:spermatogenesis"/>
    <property type="evidence" value="ECO:0007669"/>
    <property type="project" value="UniProtKB-KW"/>
</dbReference>
<dbReference type="InterPro" id="IPR000753">
    <property type="entry name" value="Clusterin-like"/>
</dbReference>
<dbReference type="InterPro" id="IPR016015">
    <property type="entry name" value="Clusterin_C"/>
</dbReference>
<dbReference type="InterPro" id="IPR033986">
    <property type="entry name" value="Clusterin_CS"/>
</dbReference>
<dbReference type="PANTHER" id="PTHR10970">
    <property type="entry name" value="CLUSTERIN"/>
    <property type="match status" value="1"/>
</dbReference>
<dbReference type="PANTHER" id="PTHR10970:SF1">
    <property type="entry name" value="CLUSTERIN"/>
    <property type="match status" value="1"/>
</dbReference>
<dbReference type="Pfam" id="PF01093">
    <property type="entry name" value="Clusterin"/>
    <property type="match status" value="1"/>
</dbReference>
<dbReference type="SMART" id="SM00035">
    <property type="entry name" value="CLa"/>
    <property type="match status" value="1"/>
</dbReference>
<dbReference type="PROSITE" id="PS00493">
    <property type="entry name" value="CLUSTERIN_2"/>
    <property type="match status" value="1"/>
</dbReference>
<name>CLUS_MESAU</name>
<gene>
    <name evidence="2" type="primary">CLU</name>
</gene>
<feature type="chain" id="PRO_0000005532" description="Clusterin">
    <location>
        <begin position="1" status="less than"/>
        <end position="191" status="greater than"/>
    </location>
</feature>
<feature type="chain" id="PRO_0000005533" description="Clusterin beta chain">
    <location>
        <begin position="1" status="less than"/>
        <end position="15"/>
    </location>
</feature>
<feature type="chain" id="PRO_0000005534" description="Clusterin alpha chain">
    <location>
        <begin position="16"/>
        <end position="191" status="greater than"/>
    </location>
</feature>
<feature type="modified residue" description="Phosphoserine" evidence="2">
    <location>
        <position position="184"/>
    </location>
</feature>
<feature type="glycosylation site" description="N-linked (GlcNAc...) asparagine" evidence="7">
    <location>
        <position position="79"/>
    </location>
</feature>
<feature type="glycosylation site" description="N-linked (GlcNAc...) asparagine" evidence="7">
    <location>
        <position position="116"/>
    </location>
</feature>
<feature type="glycosylation site" description="N-linked (GlcNAc...) asparagine" evidence="5">
    <location>
        <position position="142"/>
    </location>
</feature>
<feature type="glycosylation site" description="N-linked (GlcNAc...) asparagine" evidence="5">
    <location>
        <position position="162"/>
    </location>
</feature>
<feature type="non-terminal residue">
    <location>
        <position position="1"/>
    </location>
</feature>
<feature type="non-terminal residue">
    <location>
        <position position="191"/>
    </location>
</feature>
<keyword id="KW-0143">Chaperone</keyword>
<keyword id="KW-0963">Cytoplasm</keyword>
<keyword id="KW-0968">Cytoplasmic vesicle</keyword>
<keyword id="KW-0217">Developmental protein</keyword>
<keyword id="KW-0221">Differentiation</keyword>
<keyword id="KW-1015">Disulfide bond</keyword>
<keyword id="KW-0256">Endoplasmic reticulum</keyword>
<keyword id="KW-0325">Glycoprotein</keyword>
<keyword id="KW-0472">Membrane</keyword>
<keyword id="KW-0492">Microsome</keyword>
<keyword id="KW-0496">Mitochondrion</keyword>
<keyword id="KW-0539">Nucleus</keyword>
<keyword id="KW-0597">Phosphoprotein</keyword>
<keyword id="KW-1185">Reference proteome</keyword>
<keyword id="KW-0964">Secreted</keyword>
<keyword id="KW-0744">Spermatogenesis</keyword>
<keyword id="KW-0832">Ubl conjugation</keyword>
<organism>
    <name type="scientific">Mesocricetus auratus</name>
    <name type="common">Golden hamster</name>
    <dbReference type="NCBI Taxonomy" id="10036"/>
    <lineage>
        <taxon>Eukaryota</taxon>
        <taxon>Metazoa</taxon>
        <taxon>Chordata</taxon>
        <taxon>Craniata</taxon>
        <taxon>Vertebrata</taxon>
        <taxon>Euteleostomi</taxon>
        <taxon>Mammalia</taxon>
        <taxon>Eutheria</taxon>
        <taxon>Euarchontoglires</taxon>
        <taxon>Glires</taxon>
        <taxon>Rodentia</taxon>
        <taxon>Myomorpha</taxon>
        <taxon>Muroidea</taxon>
        <taxon>Cricetidae</taxon>
        <taxon>Cricetinae</taxon>
        <taxon>Mesocricetus</taxon>
    </lineage>
</organism>
<proteinExistence type="evidence at transcript level"/>
<reference key="1">
    <citation type="submission" date="1989-08" db="EMBL/GenBank/DDBJ databases">
        <authorList>
            <person name="Duguid J.R."/>
            <person name="Bohmont C."/>
            <person name="Liu N."/>
            <person name="Tourtellotte W.W."/>
        </authorList>
    </citation>
    <scope>NUCLEOTIDE SEQUENCE [MRNA] OF 1-23 AND 124-191</scope>
</reference>
<reference key="2">
    <citation type="journal article" date="1989" name="Proc. Natl. Acad. Sci. U.S.A.">
        <title>Changes in brain gene expression shared by scrapie and Alzheimer disease.</title>
        <authorList>
            <person name="Duguid J.R."/>
            <person name="Bohmont C.W."/>
            <person name="Liu N.G."/>
            <person name="Tourtellotte W.W."/>
        </authorList>
    </citation>
    <scope>NUCLEOTIDE SEQUENCE [MRNA] OF 24-123</scope>
</reference>
<comment type="function">
    <text evidence="1 2 3">Functions as extracellular chaperone that prevents aggregation of non native proteins. Prevents stress-induced aggregation of blood plasma proteins. Inhibits formation of amyloid fibrils by APP, APOC2, B2M, CALCA, CSN3, SNCA and aggregation-prone LYZ variants (in vitro). Does not require ATP. Maintains partially unfolded proteins in a state appropriate for subsequent refolding by other chaperones, such as HSPA8/HSC70. Does not refold proteins by itself. Binding to cell surface receptors triggers internalization of the chaperone-client complex and subsequent lysosomal or proteasomal degradation. When secreted, protects cells against apoptosis and against cytolysis by complement: inhibits assembly of the complement membrane attack complex (MAC) by preventing polymerization of C9 pore component of the MAC complex. Intracellular forms interact with ubiquitin and SCF (SKP1-CUL1-F-box protein) E3 ubiquitin-protein ligase complexes and promote the ubiquitination and subsequent proteasomal degradation of target proteins. Promotes proteasomal degradation of COMMD1 and IKBKB. Modulates NF-kappa-B transcriptional activity (By similarity). Following stress, promotes apoptosis (By similarity). Inhibits apoptosis when associated with the mitochondrial membrane by interference with BAX-dependent release of cytochrome c into the cytoplasm. Plays a role in the regulation of cell proliferation. An intracellular form suppresses stress-induced apoptosis by stabilizing mitochondrial membrane integrity through interaction with HSPA5. Secreted form does not affect caspase or BAX-mediated intrinsic apoptosis and TNF-induced NF-kappa-B-activity (By similarity). Secreted form act as an important modulator during neuronal differentiation through interaction with STMN3 (By similarity). Plays a role in the clearance of immune complexes that arise during cell injury (By similarity).</text>
</comment>
<comment type="subunit">
    <text evidence="1 2">Antiparallel disulfide-linked heterodimer of an alpha chain and a beta chain. Self-associates and forms higher oligomers. Interacts with a broad range of misfolded proteins, including APP, APOC2 and LYZ. Slightly acidic pH promotes interaction with misfolded proteins. Forms high-molecular weight oligomers upon interaction with misfolded proteins. Interacts with APOA1, LRP2, CLUAP1 and PON1. Interacts with the complement membrane attack complex. Interacts (via alpha chain) with XRCC6. Interacts with SYVN1, COMMD1, BTRC, CUL1 and with ubiquitin and SCF (SKP1-CUL1-F-box protein) E3 ubiquitin-protein ligase complexes. Interacts (via alpha chain) with BAX in stressed cells, where BAX undergoes a conformation change leading to association with the mitochondrial membrane. Does not interact with BAX in unstressed cells. Found in a complex with LTF, CLU, EPPIN and SEMG1. Interacts (immaturely glycosylated pre-secreted form) with HSPA5; this interaction promotes CLU stability and facilitates stress-induced CLU retrotranslocation from the secretory pathway to the mitochondria, thereby reducing stress-induced apoptosis by stabilizing mitochondrial membrane integrity. Interacts with BCL2L1; this interaction releases and activates BAX and promotes cell death. Interacts with TGFBR2 and ACVR1 (By similarity). Interacts (secreted form) with STMN3; this interaction may act as an important modulator during neuronal differentiation (By similarity).</text>
</comment>
<comment type="subcellular location">
    <subcellularLocation>
        <location evidence="2">Secreted</location>
    </subcellularLocation>
    <subcellularLocation>
        <location evidence="2">Nucleus</location>
    </subcellularLocation>
    <subcellularLocation>
        <location evidence="2">Cytoplasm</location>
    </subcellularLocation>
    <subcellularLocation>
        <location evidence="2">Mitochondrion membrane</location>
        <topology evidence="2">Peripheral membrane protein</topology>
        <orientation evidence="2">Cytoplasmic side</orientation>
    </subcellularLocation>
    <subcellularLocation>
        <location evidence="2">Cytoplasm</location>
        <location evidence="2">Cytosol</location>
    </subcellularLocation>
    <subcellularLocation>
        <location evidence="2">Microsome</location>
    </subcellularLocation>
    <subcellularLocation>
        <location evidence="2">Endoplasmic reticulum</location>
    </subcellularLocation>
    <subcellularLocation>
        <location evidence="2">Mitochondrion</location>
    </subcellularLocation>
    <subcellularLocation>
        <location evidence="2">Mitochondrion membrane</location>
    </subcellularLocation>
    <subcellularLocation>
        <location evidence="1">Cytoplasm</location>
        <location evidence="1">Perinuclear region</location>
    </subcellularLocation>
    <subcellularLocation>
        <location evidence="4">Cytoplasmic vesicle</location>
        <location evidence="4">Secretory vesicle</location>
        <location evidence="4">Chromaffin granule</location>
    </subcellularLocation>
    <text evidence="2">Can retrotranslocate from the secretory compartments to the cytosol upon cellular stress. Detected in perinuclear foci that may be aggresomes containing misfolded, ubiquitinated proteins. Detected at the mitochondrion membrane upon induction of apoptosis. Under ER stress, a immaturely glycosylated pre-secreted form retrotranslocates from the endoplasmic reticulum (ER)-Golgi network to the cytoplasm to localize in the mitochondria through HSPA5 interaction. ER stress reduces secretion. Under the stress, minor amounts of non-secreted forms accumulate in cytoplasm.</text>
</comment>
<comment type="PTM">
    <text evidence="2">Proteolytically cleaved on its way through the secretory system, probably within the Golgi lumen. Proteolytic cleavage is not necessary for its chaperone activity. All non-secreted forms are not proteolytically cleaved. Chaperone activity of uncleaved forms is dependent on a non-reducing environment.</text>
</comment>
<comment type="PTM">
    <text evidence="2">Polyubiquitinated, leading to proteasomal degradation. Under cellular stress, the intracellular level of cleaved form is reduced due to proteasomal degradation.</text>
</comment>
<comment type="PTM">
    <text evidence="2">Heavily N-glycosylated. About 30% of the protein mass is comprised of complex N-linked carbohydrate. Endoplasmic reticulum (ER) stress induces changes in glycosylation status and increases level of hypoglycosylated forms. Core carbohydrates are essential for chaperone activity. Non-secreted forms are hypoglycosylated or unglycosylated.</text>
</comment>
<comment type="similarity">
    <text evidence="7">Belongs to the clusterin family.</text>
</comment>
<protein>
    <recommendedName>
        <fullName>Clusterin</fullName>
    </recommendedName>
    <alternativeName>
        <fullName evidence="6">Sulfated glycoprotein 2</fullName>
        <shortName>SGP-2</shortName>
    </alternativeName>
    <component>
        <recommendedName>
            <fullName>Clusterin beta chain</fullName>
        </recommendedName>
    </component>
    <component>
        <recommendedName>
            <fullName>Clusterin alpha chain</fullName>
        </recommendedName>
    </component>
</protein>
<sequence>NRRPHFLYPKSRLIRSLLPPPHYGPLSFHDMFQPFLEMIHQAQQAMDVQFHSPAFQFPDMDLLREGEDDRAVCKEIRHNSTGCLKMKGQCEKCQEILSVDCSANNPAQAHLRQELNDSLQVAERLTQRYNELLHSLQTKMLNTSSLLEQLNEQFNWVSQLANLTQGEDQYYLRVSTVTTHSSDSEVPSRVT</sequence>
<accession>P14683</accession>